<reference key="1">
    <citation type="journal article" date="2007" name="PLoS Genet.">
        <title>The complete genome sequence of Yersinia pseudotuberculosis IP31758, the causative agent of Far East scarlet-like fever.</title>
        <authorList>
            <person name="Eppinger M."/>
            <person name="Rosovitz M.J."/>
            <person name="Fricke W.F."/>
            <person name="Rasko D.A."/>
            <person name="Kokorina G."/>
            <person name="Fayolle C."/>
            <person name="Lindler L.E."/>
            <person name="Carniel E."/>
            <person name="Ravel J."/>
        </authorList>
    </citation>
    <scope>NUCLEOTIDE SEQUENCE [LARGE SCALE GENOMIC DNA]</scope>
    <source>
        <strain>IP 31758</strain>
    </source>
</reference>
<organism>
    <name type="scientific">Yersinia pseudotuberculosis serotype O:1b (strain IP 31758)</name>
    <dbReference type="NCBI Taxonomy" id="349747"/>
    <lineage>
        <taxon>Bacteria</taxon>
        <taxon>Pseudomonadati</taxon>
        <taxon>Pseudomonadota</taxon>
        <taxon>Gammaproteobacteria</taxon>
        <taxon>Enterobacterales</taxon>
        <taxon>Yersiniaceae</taxon>
        <taxon>Yersinia</taxon>
    </lineage>
</organism>
<comment type="function">
    <text evidence="1">Could be a nuclease involved in processing of the 5'-end of pre-16S rRNA.</text>
</comment>
<comment type="subcellular location">
    <subcellularLocation>
        <location evidence="1">Cytoplasm</location>
    </subcellularLocation>
</comment>
<comment type="similarity">
    <text evidence="1">Belongs to the YqgF nuclease family.</text>
</comment>
<feature type="chain" id="PRO_1000061579" description="Putative pre-16S rRNA nuclease">
    <location>
        <begin position="1"/>
        <end position="140"/>
    </location>
</feature>
<dbReference type="EC" id="3.1.-.-" evidence="1"/>
<dbReference type="EMBL" id="CP000720">
    <property type="protein sequence ID" value="ABS48428.1"/>
    <property type="molecule type" value="Genomic_DNA"/>
</dbReference>
<dbReference type="SMR" id="A7FEZ0"/>
<dbReference type="KEGG" id="ypi:YpsIP31758_0834"/>
<dbReference type="HOGENOM" id="CLU_098240_3_0_6"/>
<dbReference type="Proteomes" id="UP000002412">
    <property type="component" value="Chromosome"/>
</dbReference>
<dbReference type="GO" id="GO:0005829">
    <property type="term" value="C:cytosol"/>
    <property type="evidence" value="ECO:0007669"/>
    <property type="project" value="TreeGrafter"/>
</dbReference>
<dbReference type="GO" id="GO:0004518">
    <property type="term" value="F:nuclease activity"/>
    <property type="evidence" value="ECO:0007669"/>
    <property type="project" value="UniProtKB-KW"/>
</dbReference>
<dbReference type="GO" id="GO:0000967">
    <property type="term" value="P:rRNA 5'-end processing"/>
    <property type="evidence" value="ECO:0007669"/>
    <property type="project" value="UniProtKB-UniRule"/>
</dbReference>
<dbReference type="CDD" id="cd16964">
    <property type="entry name" value="YqgF"/>
    <property type="match status" value="1"/>
</dbReference>
<dbReference type="FunFam" id="3.30.420.140:FF:000002">
    <property type="entry name" value="Putative pre-16S rRNA nuclease"/>
    <property type="match status" value="1"/>
</dbReference>
<dbReference type="Gene3D" id="3.30.420.140">
    <property type="entry name" value="YqgF/RNase H-like domain"/>
    <property type="match status" value="1"/>
</dbReference>
<dbReference type="HAMAP" id="MF_00651">
    <property type="entry name" value="Nuclease_YqgF"/>
    <property type="match status" value="1"/>
</dbReference>
<dbReference type="InterPro" id="IPR012337">
    <property type="entry name" value="RNaseH-like_sf"/>
</dbReference>
<dbReference type="InterPro" id="IPR005227">
    <property type="entry name" value="YqgF"/>
</dbReference>
<dbReference type="InterPro" id="IPR006641">
    <property type="entry name" value="YqgF/RNaseH-like_dom"/>
</dbReference>
<dbReference type="InterPro" id="IPR037027">
    <property type="entry name" value="YqgF/RNaseH-like_dom_sf"/>
</dbReference>
<dbReference type="NCBIfam" id="TIGR00250">
    <property type="entry name" value="RNAse_H_YqgF"/>
    <property type="match status" value="1"/>
</dbReference>
<dbReference type="PANTHER" id="PTHR33317">
    <property type="entry name" value="POLYNUCLEOTIDYL TRANSFERASE, RIBONUCLEASE H-LIKE SUPERFAMILY PROTEIN"/>
    <property type="match status" value="1"/>
</dbReference>
<dbReference type="PANTHER" id="PTHR33317:SF4">
    <property type="entry name" value="POLYNUCLEOTIDYL TRANSFERASE, RIBONUCLEASE H-LIKE SUPERFAMILY PROTEIN"/>
    <property type="match status" value="1"/>
</dbReference>
<dbReference type="Pfam" id="PF03652">
    <property type="entry name" value="RuvX"/>
    <property type="match status" value="1"/>
</dbReference>
<dbReference type="SMART" id="SM00732">
    <property type="entry name" value="YqgFc"/>
    <property type="match status" value="1"/>
</dbReference>
<dbReference type="SUPFAM" id="SSF53098">
    <property type="entry name" value="Ribonuclease H-like"/>
    <property type="match status" value="1"/>
</dbReference>
<gene>
    <name evidence="1" type="primary">yqgF</name>
    <name type="ordered locus">YpsIP31758_0834</name>
</gene>
<protein>
    <recommendedName>
        <fullName evidence="1">Putative pre-16S rRNA nuclease</fullName>
        <ecNumber evidence="1">3.1.-.-</ecNumber>
    </recommendedName>
</protein>
<evidence type="ECO:0000255" key="1">
    <source>
        <dbReference type="HAMAP-Rule" id="MF_00651"/>
    </source>
</evidence>
<proteinExistence type="inferred from homology"/>
<accession>A7FEZ0</accession>
<keyword id="KW-0963">Cytoplasm</keyword>
<keyword id="KW-0378">Hydrolase</keyword>
<keyword id="KW-0540">Nuclease</keyword>
<keyword id="KW-0690">Ribosome biogenesis</keyword>
<name>YQGF_YERP3</name>
<sequence length="140" mass="15316">MANRTIIAFDFGTKSIGVAIGQEVTGTARALTAFKAQDGTPDWQQVEKLLKEWQPNLVVVGLPLNMDGTEQPLTARARRFANRLHGRFGVQVALQDERLSTVEARANLFDRGGYRALDKGSVDAASAVIILESWFDEQAG</sequence>